<evidence type="ECO:0000255" key="1">
    <source>
        <dbReference type="HAMAP-Rule" id="MF_00003"/>
    </source>
</evidence>
<reference key="1">
    <citation type="journal article" date="2003" name="Genome Res.">
        <title>Tropheryma whipplei twist: a human pathogenic Actinobacteria with a reduced genome.</title>
        <authorList>
            <person name="Raoult D."/>
            <person name="Ogata H."/>
            <person name="Audic S."/>
            <person name="Robert C."/>
            <person name="Suhre K."/>
            <person name="Drancourt M."/>
            <person name="Claverie J.-M."/>
        </authorList>
    </citation>
    <scope>NUCLEOTIDE SEQUENCE [LARGE SCALE GENOMIC DNA]</scope>
    <source>
        <strain>Twist</strain>
    </source>
</reference>
<proteinExistence type="inferred from homology"/>
<protein>
    <recommendedName>
        <fullName evidence="1">Ribosome-binding factor A</fullName>
    </recommendedName>
</protein>
<comment type="function">
    <text evidence="1">One of several proteins that assist in the late maturation steps of the functional core of the 30S ribosomal subunit. Associates with free 30S ribosomal subunits (but not with 30S subunits that are part of 70S ribosomes or polysomes). Required for efficient processing of 16S rRNA. May interact with the 5'-terminal helix region of 16S rRNA.</text>
</comment>
<comment type="subunit">
    <text evidence="1">Monomer. Binds 30S ribosomal subunits, but not 50S ribosomal subunits or 70S ribosomes.</text>
</comment>
<comment type="subcellular location">
    <subcellularLocation>
        <location evidence="1">Cytoplasm</location>
    </subcellularLocation>
</comment>
<comment type="similarity">
    <text evidence="1">Belongs to the RbfA family.</text>
</comment>
<accession>Q83N20</accession>
<dbReference type="EMBL" id="AE014184">
    <property type="protein sequence ID" value="AAO44256.1"/>
    <property type="molecule type" value="Genomic_DNA"/>
</dbReference>
<dbReference type="RefSeq" id="WP_011096557.1">
    <property type="nucleotide sequence ID" value="NC_004572.3"/>
</dbReference>
<dbReference type="SMR" id="Q83N20"/>
<dbReference type="STRING" id="203267.TWT_159"/>
<dbReference type="KEGG" id="twh:TWT_159"/>
<dbReference type="eggNOG" id="COG0858">
    <property type="taxonomic scope" value="Bacteria"/>
</dbReference>
<dbReference type="HOGENOM" id="CLU_1389689_0_0_11"/>
<dbReference type="OrthoDB" id="307788at2"/>
<dbReference type="Proteomes" id="UP000002200">
    <property type="component" value="Chromosome"/>
</dbReference>
<dbReference type="GO" id="GO:0005829">
    <property type="term" value="C:cytosol"/>
    <property type="evidence" value="ECO:0007669"/>
    <property type="project" value="TreeGrafter"/>
</dbReference>
<dbReference type="GO" id="GO:0043024">
    <property type="term" value="F:ribosomal small subunit binding"/>
    <property type="evidence" value="ECO:0007669"/>
    <property type="project" value="TreeGrafter"/>
</dbReference>
<dbReference type="GO" id="GO:0030490">
    <property type="term" value="P:maturation of SSU-rRNA"/>
    <property type="evidence" value="ECO:0007669"/>
    <property type="project" value="UniProtKB-UniRule"/>
</dbReference>
<dbReference type="Gene3D" id="3.30.300.20">
    <property type="match status" value="1"/>
</dbReference>
<dbReference type="HAMAP" id="MF_00003">
    <property type="entry name" value="RbfA"/>
    <property type="match status" value="1"/>
</dbReference>
<dbReference type="InterPro" id="IPR015946">
    <property type="entry name" value="KH_dom-like_a/b"/>
</dbReference>
<dbReference type="InterPro" id="IPR000238">
    <property type="entry name" value="RbfA"/>
</dbReference>
<dbReference type="InterPro" id="IPR023799">
    <property type="entry name" value="RbfA_dom_sf"/>
</dbReference>
<dbReference type="NCBIfam" id="TIGR00082">
    <property type="entry name" value="rbfA"/>
    <property type="match status" value="1"/>
</dbReference>
<dbReference type="PANTHER" id="PTHR33515">
    <property type="entry name" value="RIBOSOME-BINDING FACTOR A, CHLOROPLASTIC-RELATED"/>
    <property type="match status" value="1"/>
</dbReference>
<dbReference type="PANTHER" id="PTHR33515:SF1">
    <property type="entry name" value="RIBOSOME-BINDING FACTOR A, CHLOROPLASTIC-RELATED"/>
    <property type="match status" value="1"/>
</dbReference>
<dbReference type="Pfam" id="PF02033">
    <property type="entry name" value="RBFA"/>
    <property type="match status" value="1"/>
</dbReference>
<dbReference type="SUPFAM" id="SSF89919">
    <property type="entry name" value="Ribosome-binding factor A, RbfA"/>
    <property type="match status" value="1"/>
</dbReference>
<organism>
    <name type="scientific">Tropheryma whipplei (strain Twist)</name>
    <name type="common">Whipple's bacillus</name>
    <dbReference type="NCBI Taxonomy" id="203267"/>
    <lineage>
        <taxon>Bacteria</taxon>
        <taxon>Bacillati</taxon>
        <taxon>Actinomycetota</taxon>
        <taxon>Actinomycetes</taxon>
        <taxon>Micrococcales</taxon>
        <taxon>Tropherymataceae</taxon>
        <taxon>Tropheryma</taxon>
    </lineage>
</organism>
<sequence>MDRVKEFAMKDQIRAHRMAGRIRHLISRQIETKLRDQLGLVTITEVQVTGDLHHAKVFVTVYGTKDEAQTALKILEDNRANFRRSLGVLKVRFVPTVEFELDRLFEDAGIMDELIQRARESDKRIAAGASGPIDNDATALMDKVVDQEARNPDSWHTAPTSSSHTAGLCLVRASSPIACNIDSTTLCKPRTPGPGL</sequence>
<name>RBFA_TROWT</name>
<gene>
    <name evidence="1" type="primary">rbfA</name>
    <name type="ordered locus">TWT_159</name>
</gene>
<feature type="chain" id="PRO_0000102763" description="Ribosome-binding factor A">
    <location>
        <begin position="1"/>
        <end position="196"/>
    </location>
</feature>
<keyword id="KW-0963">Cytoplasm</keyword>
<keyword id="KW-1185">Reference proteome</keyword>
<keyword id="KW-0690">Ribosome biogenesis</keyword>